<proteinExistence type="evidence at protein level"/>
<reference key="1">
    <citation type="submission" date="2006-02" db="EMBL/GenBank/DDBJ databases">
        <authorList>
            <consortium name="NIH - Mammalian Gene Collection (MGC) project"/>
        </authorList>
    </citation>
    <scope>NUCLEOTIDE SEQUENCE [LARGE SCALE MRNA]</scope>
    <source>
        <strain>Hereford</strain>
        <tissue>Heart ventricle</tissue>
    </source>
</reference>
<reference key="2">
    <citation type="journal article" date="2011" name="Science">
        <title>Sirt5 is a NAD-dependent protein lysine demalonylase and desuccinylase.</title>
        <authorList>
            <person name="Du J."/>
            <person name="Zhou Y."/>
            <person name="Su X."/>
            <person name="Yu J.J."/>
            <person name="Khan S."/>
            <person name="Jiang H."/>
            <person name="Kim J."/>
            <person name="Woo J."/>
            <person name="Kim J.H."/>
            <person name="Choi B.H."/>
            <person name="He B."/>
            <person name="Chen W."/>
            <person name="Zhang S."/>
            <person name="Cerione R.A."/>
            <person name="Auwerx J."/>
            <person name="Hao Q."/>
            <person name="Lin H."/>
        </authorList>
    </citation>
    <scope>ACETYLATION AT LYS-76</scope>
    <scope>SUCCINYLATION AT LYS-76</scope>
</reference>
<sequence length="466" mass="51773">MALLTAAARLFGAKNASCLVLAARHASASSTNLKDILADLIPKEQTRVKAFRQQHGKTVVGQITVDMMYGGMRGMKGLVYETSVLDPDEGIRFRGYSIPECQKLLPKAKGGEEPLPEGLFWLLVTGQIPTEEQVSWLSQEWAKRAALPSHVVTMLDNFPTNLHPMSQLSAAVTALNSESTFARAYSEGINRTKYWELIYEDSMDLIAKLPCVAAKIYRNLYREGSSIGAIDPKLDWSHNFTNMLGYTDAQFTELMRLYLTIHSDHEGGNVSAHTSHLVGSALSDPYLSFAAAMNGLAGPLHGLANQEVLVWLTQLQKEVGKDVSDEKLRDYIWNTLNSGRVVPGYGHAVLRKTDPRYTCQREFALKHLPQDPMFKLVAQLYKIVPNILLEQGKAKNPWPNVDAHSGVLLQYYGMTEMNYYTVLFGVSRALGVLAQLIWSRALGFPLERPKSMSTDGLMKFVDSKSG</sequence>
<dbReference type="EC" id="2.3.3.1"/>
<dbReference type="EMBL" id="BC114138">
    <property type="protein sequence ID" value="AAI14139.1"/>
    <property type="molecule type" value="mRNA"/>
</dbReference>
<dbReference type="RefSeq" id="NP_001038186.1">
    <property type="nucleotide sequence ID" value="NM_001044721.1"/>
</dbReference>
<dbReference type="SMR" id="Q29RK1"/>
<dbReference type="FunCoup" id="Q29RK1">
    <property type="interactions" value="2636"/>
</dbReference>
<dbReference type="IntAct" id="Q29RK1">
    <property type="interactions" value="1"/>
</dbReference>
<dbReference type="STRING" id="9913.ENSBTAP00000005730"/>
<dbReference type="ChEMBL" id="CHEMBL2406901"/>
<dbReference type="GlyGen" id="Q29RK1">
    <property type="glycosylation" value="1 site, 1 O-linked glycan (1 site)"/>
</dbReference>
<dbReference type="iPTMnet" id="Q29RK1"/>
<dbReference type="PaxDb" id="9913-ENSBTAP00000005730"/>
<dbReference type="PeptideAtlas" id="Q29RK1"/>
<dbReference type="Ensembl" id="ENSBTAT00000005730.5">
    <property type="protein sequence ID" value="ENSBTAP00000005730.4"/>
    <property type="gene ID" value="ENSBTAG00000004371.6"/>
</dbReference>
<dbReference type="GeneID" id="280682"/>
<dbReference type="KEGG" id="bta:280682"/>
<dbReference type="CTD" id="1431"/>
<dbReference type="VEuPathDB" id="HostDB:ENSBTAG00000004371"/>
<dbReference type="VGNC" id="VGNC:27748">
    <property type="gene designation" value="CS"/>
</dbReference>
<dbReference type="eggNOG" id="KOG2617">
    <property type="taxonomic scope" value="Eukaryota"/>
</dbReference>
<dbReference type="GeneTree" id="ENSGT00390000006813"/>
<dbReference type="HOGENOM" id="CLU_022049_2_1_1"/>
<dbReference type="InParanoid" id="Q29RK1"/>
<dbReference type="OMA" id="VLEWLFK"/>
<dbReference type="OrthoDB" id="8017587at2759"/>
<dbReference type="TreeFam" id="TF300398"/>
<dbReference type="Reactome" id="R-BTA-71403">
    <property type="pathway name" value="Citric acid cycle (TCA cycle)"/>
</dbReference>
<dbReference type="Reactome" id="R-BTA-9837999">
    <property type="pathway name" value="Mitochondrial protein degradation"/>
</dbReference>
<dbReference type="Reactome" id="R-BTA-9854311">
    <property type="pathway name" value="Maturation of TCA enzymes and regulation of TCA cycle"/>
</dbReference>
<dbReference type="SABIO-RK" id="Q29RK1"/>
<dbReference type="UniPathway" id="UPA00223">
    <property type="reaction ID" value="UER00717"/>
</dbReference>
<dbReference type="PRO" id="PR:Q29RK1"/>
<dbReference type="Proteomes" id="UP000009136">
    <property type="component" value="Chromosome 5"/>
</dbReference>
<dbReference type="Bgee" id="ENSBTAG00000004371">
    <property type="expression patterns" value="Expressed in oocyte and 106 other cell types or tissues"/>
</dbReference>
<dbReference type="GO" id="GO:0005759">
    <property type="term" value="C:mitochondrial matrix"/>
    <property type="evidence" value="ECO:0000318"/>
    <property type="project" value="GO_Central"/>
</dbReference>
<dbReference type="GO" id="GO:0004108">
    <property type="term" value="F:citrate (Si)-synthase activity"/>
    <property type="evidence" value="ECO:0000250"/>
    <property type="project" value="UniProtKB"/>
</dbReference>
<dbReference type="GO" id="GO:0042802">
    <property type="term" value="F:identical protein binding"/>
    <property type="evidence" value="ECO:0000250"/>
    <property type="project" value="UniProtKB"/>
</dbReference>
<dbReference type="GO" id="GO:0005975">
    <property type="term" value="P:carbohydrate metabolic process"/>
    <property type="evidence" value="ECO:0000318"/>
    <property type="project" value="GO_Central"/>
</dbReference>
<dbReference type="GO" id="GO:0006101">
    <property type="term" value="P:citrate metabolic process"/>
    <property type="evidence" value="ECO:0007669"/>
    <property type="project" value="InterPro"/>
</dbReference>
<dbReference type="GO" id="GO:0006099">
    <property type="term" value="P:tricarboxylic acid cycle"/>
    <property type="evidence" value="ECO:0000318"/>
    <property type="project" value="GO_Central"/>
</dbReference>
<dbReference type="CDD" id="cd06105">
    <property type="entry name" value="ScCit1-2_like"/>
    <property type="match status" value="1"/>
</dbReference>
<dbReference type="FunFam" id="1.10.230.10:FF:000001">
    <property type="entry name" value="Citrate synthase"/>
    <property type="match status" value="1"/>
</dbReference>
<dbReference type="FunFam" id="1.10.580.10:FF:000001">
    <property type="entry name" value="Citrate synthase"/>
    <property type="match status" value="1"/>
</dbReference>
<dbReference type="Gene3D" id="1.10.580.10">
    <property type="entry name" value="Citrate Synthase, domain 1"/>
    <property type="match status" value="1"/>
</dbReference>
<dbReference type="Gene3D" id="1.10.230.10">
    <property type="entry name" value="Cytochrome P450-Terp, domain 2"/>
    <property type="match status" value="1"/>
</dbReference>
<dbReference type="InterPro" id="IPR016142">
    <property type="entry name" value="Citrate_synth-like_lrg_a-sub"/>
</dbReference>
<dbReference type="InterPro" id="IPR016143">
    <property type="entry name" value="Citrate_synth-like_sm_a-sub"/>
</dbReference>
<dbReference type="InterPro" id="IPR002020">
    <property type="entry name" value="Citrate_synthase"/>
</dbReference>
<dbReference type="InterPro" id="IPR019810">
    <property type="entry name" value="Citrate_synthase_AS"/>
</dbReference>
<dbReference type="InterPro" id="IPR010109">
    <property type="entry name" value="Citrate_synthase_euk"/>
</dbReference>
<dbReference type="InterPro" id="IPR036969">
    <property type="entry name" value="Citrate_synthase_sf"/>
</dbReference>
<dbReference type="NCBIfam" id="TIGR01793">
    <property type="entry name" value="cit_synth_euk"/>
    <property type="match status" value="1"/>
</dbReference>
<dbReference type="NCBIfam" id="NF007128">
    <property type="entry name" value="PRK09569.1"/>
    <property type="match status" value="1"/>
</dbReference>
<dbReference type="PANTHER" id="PTHR11739">
    <property type="entry name" value="CITRATE SYNTHASE"/>
    <property type="match status" value="1"/>
</dbReference>
<dbReference type="PANTHER" id="PTHR11739:SF8">
    <property type="entry name" value="CITRATE SYNTHASE, MITOCHONDRIAL"/>
    <property type="match status" value="1"/>
</dbReference>
<dbReference type="Pfam" id="PF00285">
    <property type="entry name" value="Citrate_synt"/>
    <property type="match status" value="1"/>
</dbReference>
<dbReference type="PRINTS" id="PR00143">
    <property type="entry name" value="CITRTSNTHASE"/>
</dbReference>
<dbReference type="SUPFAM" id="SSF48256">
    <property type="entry name" value="Citrate synthase"/>
    <property type="match status" value="1"/>
</dbReference>
<dbReference type="PROSITE" id="PS00480">
    <property type="entry name" value="CITRATE_SYNTHASE"/>
    <property type="match status" value="1"/>
</dbReference>
<comment type="function">
    <text evidence="7">Key enzyme of the Krebs tricarboxylic acid cycle which catalyzes the synthesis of citrate from acetyl coenzyme A and oxaloacetate.</text>
</comment>
<comment type="catalytic activity">
    <reaction evidence="5">
        <text>oxaloacetate + acetyl-CoA + H2O = citrate + CoA + H(+)</text>
        <dbReference type="Rhea" id="RHEA:16845"/>
        <dbReference type="ChEBI" id="CHEBI:15377"/>
        <dbReference type="ChEBI" id="CHEBI:15378"/>
        <dbReference type="ChEBI" id="CHEBI:16452"/>
        <dbReference type="ChEBI" id="CHEBI:16947"/>
        <dbReference type="ChEBI" id="CHEBI:57287"/>
        <dbReference type="ChEBI" id="CHEBI:57288"/>
        <dbReference type="EC" id="2.3.3.1"/>
    </reaction>
</comment>
<comment type="pathway">
    <text>Carbohydrate metabolism; tricarboxylic acid cycle; isocitrate from oxaloacetate: step 1/2.</text>
</comment>
<comment type="subunit">
    <text evidence="2">Homodimer.</text>
</comment>
<comment type="subcellular location">
    <subcellularLocation>
        <location evidence="3">Mitochondrion matrix</location>
    </subcellularLocation>
</comment>
<comment type="PTM">
    <text evidence="2">Methylated. Trimethylation at Lys-395 by CSKMT decreases citrate synthase activity.</text>
</comment>
<comment type="PTM">
    <text evidence="2">In response to mitochondrial stress, the precursor protein is ubiquitinated by the SIFI complex in the cytoplasm before mitochondrial import, leading to its degradation. Within the SIFI complex, UBR4 initiates ubiquitin chain that are further elongated or branched by KCMF1.</text>
</comment>
<comment type="miscellaneous">
    <text>Citrate synthase is found in nearly all cells capable of oxidative metabolism.</text>
</comment>
<comment type="similarity">
    <text evidence="7">Belongs to the citrate synthase family.</text>
</comment>
<organism>
    <name type="scientific">Bos taurus</name>
    <name type="common">Bovine</name>
    <dbReference type="NCBI Taxonomy" id="9913"/>
    <lineage>
        <taxon>Eukaryota</taxon>
        <taxon>Metazoa</taxon>
        <taxon>Chordata</taxon>
        <taxon>Craniata</taxon>
        <taxon>Vertebrata</taxon>
        <taxon>Euteleostomi</taxon>
        <taxon>Mammalia</taxon>
        <taxon>Eutheria</taxon>
        <taxon>Laurasiatheria</taxon>
        <taxon>Artiodactyla</taxon>
        <taxon>Ruminantia</taxon>
        <taxon>Pecora</taxon>
        <taxon>Bovidae</taxon>
        <taxon>Bovinae</taxon>
        <taxon>Bos</taxon>
    </lineage>
</organism>
<keyword id="KW-0007">Acetylation</keyword>
<keyword id="KW-0488">Methylation</keyword>
<keyword id="KW-0496">Mitochondrion</keyword>
<keyword id="KW-0597">Phosphoprotein</keyword>
<keyword id="KW-1185">Reference proteome</keyword>
<keyword id="KW-0808">Transferase</keyword>
<keyword id="KW-0809">Transit peptide</keyword>
<keyword id="KW-0816">Tricarboxylic acid cycle</keyword>
<keyword id="KW-0832">Ubl conjugation</keyword>
<protein>
    <recommendedName>
        <fullName>Citrate synthase, mitochondrial</fullName>
        <ecNumber>2.3.3.1</ecNumber>
    </recommendedName>
    <alternativeName>
        <fullName>Citrate (Si)-synthase</fullName>
    </alternativeName>
</protein>
<name>CISY_BOVIN</name>
<feature type="transit peptide" description="Mitochondrion" evidence="1">
    <location>
        <begin position="1"/>
        <end position="27"/>
    </location>
</feature>
<feature type="chain" id="PRO_0000244377" description="Citrate synthase, mitochondrial">
    <location>
        <begin position="28"/>
        <end position="466"/>
    </location>
</feature>
<feature type="short sequence motif" description="SIFI-degron" evidence="2">
    <location>
        <begin position="2"/>
        <end position="21"/>
    </location>
</feature>
<feature type="active site" evidence="5">
    <location>
        <position position="301"/>
    </location>
</feature>
<feature type="active site" evidence="5">
    <location>
        <position position="347"/>
    </location>
</feature>
<feature type="active site" evidence="5">
    <location>
        <position position="402"/>
    </location>
</feature>
<feature type="binding site" description="in chain A" evidence="2">
    <location>
        <position position="356"/>
    </location>
    <ligand>
        <name>oxaloacetate</name>
        <dbReference type="ChEBI" id="CHEBI:16452"/>
        <note>ligand shared between homodimeric partners</note>
    </ligand>
</feature>
<feature type="binding site" description="in chain A" evidence="2">
    <location>
        <position position="428"/>
    </location>
    <ligand>
        <name>oxaloacetate</name>
        <dbReference type="ChEBI" id="CHEBI:16452"/>
        <note>ligand shared between homodimeric partners</note>
    </ligand>
</feature>
<feature type="binding site" description="in chain B" evidence="2">
    <location>
        <position position="448"/>
    </location>
    <ligand>
        <name>oxaloacetate</name>
        <dbReference type="ChEBI" id="CHEBI:16452"/>
        <note>ligand shared between homodimeric partners</note>
    </ligand>
</feature>
<feature type="modified residue" description="N6-succinyllysine" evidence="4">
    <location>
        <position position="57"/>
    </location>
</feature>
<feature type="modified residue" description="N6-acetyllysine; alternate" evidence="6">
    <location>
        <position position="76"/>
    </location>
</feature>
<feature type="modified residue" description="N6-succinyllysine; alternate" evidence="6">
    <location>
        <position position="76"/>
    </location>
</feature>
<feature type="modified residue" description="N6-succinyllysine" evidence="4">
    <location>
        <position position="103"/>
    </location>
</feature>
<feature type="modified residue" description="N6-succinyllysine" evidence="4">
    <location>
        <position position="193"/>
    </location>
</feature>
<feature type="modified residue" description="Phosphoserine" evidence="4">
    <location>
        <position position="226"/>
    </location>
</feature>
<feature type="modified residue" description="N6-acetyllysine; alternate" evidence="4">
    <location>
        <position position="321"/>
    </location>
</feature>
<feature type="modified residue" description="N6-succinyllysine; alternate" evidence="4">
    <location>
        <position position="321"/>
    </location>
</feature>
<feature type="modified residue" description="N6-acetyllysine; alternate" evidence="2">
    <location>
        <position position="327"/>
    </location>
</feature>
<feature type="modified residue" description="N6-succinyllysine; alternate" evidence="4">
    <location>
        <position position="327"/>
    </location>
</feature>
<feature type="modified residue" description="N6-acetyllysine; alternate" evidence="2">
    <location>
        <position position="375"/>
    </location>
</feature>
<feature type="modified residue" description="N6-succinyllysine; alternate" evidence="4">
    <location>
        <position position="375"/>
    </location>
</feature>
<feature type="modified residue" description="N6-acetyllysine" evidence="2">
    <location>
        <position position="382"/>
    </location>
</feature>
<feature type="modified residue" description="N6-acetyllysine; alternate" evidence="2">
    <location>
        <position position="393"/>
    </location>
</feature>
<feature type="modified residue" description="N6-succinyllysine; alternate" evidence="4">
    <location>
        <position position="393"/>
    </location>
</feature>
<feature type="modified residue" description="N6,N6,N6-trimethyllysine" evidence="2">
    <location>
        <position position="395"/>
    </location>
</feature>
<feature type="modified residue" description="N6-succinyllysine" evidence="4">
    <location>
        <position position="450"/>
    </location>
</feature>
<feature type="modified residue" description="N6-acetyllysine; alternate" evidence="4">
    <location>
        <position position="459"/>
    </location>
</feature>
<feature type="modified residue" description="N6-succinyllysine; alternate" evidence="4">
    <location>
        <position position="459"/>
    </location>
</feature>
<gene>
    <name type="primary">CS</name>
</gene>
<evidence type="ECO:0000250" key="1"/>
<evidence type="ECO:0000250" key="2">
    <source>
        <dbReference type="UniProtKB" id="O75390"/>
    </source>
</evidence>
<evidence type="ECO:0000250" key="3">
    <source>
        <dbReference type="UniProtKB" id="P00889"/>
    </source>
</evidence>
<evidence type="ECO:0000250" key="4">
    <source>
        <dbReference type="UniProtKB" id="Q9CZU6"/>
    </source>
</evidence>
<evidence type="ECO:0000255" key="5">
    <source>
        <dbReference type="PROSITE-ProRule" id="PRU10117"/>
    </source>
</evidence>
<evidence type="ECO:0000269" key="6">
    <source>
    </source>
</evidence>
<evidence type="ECO:0000305" key="7"/>
<accession>Q29RK1</accession>